<comment type="function">
    <text evidence="7 10 11 14">Nuclear receptor coactivator that directly binds nuclear receptors and stimulates the transcriptional activities in a hormone-dependent fashion. Involved in the coactivation of different nuclear receptors, such as for steroids (PGR, GR and ER), retinoids (RXRs), thyroid hormone (TRs) and prostanoids (PPARs). Also involved in coactivation mediated by STAT3, STAT5A, STAT5B and STAT6 transcription factors. Displays histone acetyltransferase activity toward H3 and H4; the relevance of such activity remains however unclear. Plays a central role in creating multisubunit coactivator complexes that act via remodeling of chromatin, and possibly acts by participating in both chromatin remodeling and recruitment of general transcription factors. Required with NCOA2 to control energy balance between white and brown adipose tissues. Required for mediating steroid hormone response. Isoform 2 has a higher thyroid hormone-dependent transactivation activity than isoform 1 and isoform 3.</text>
</comment>
<comment type="catalytic activity">
    <reaction>
        <text>L-lysyl-[protein] + acetyl-CoA = N(6)-acetyl-L-lysyl-[protein] + CoA + H(+)</text>
        <dbReference type="Rhea" id="RHEA:45948"/>
        <dbReference type="Rhea" id="RHEA-COMP:9752"/>
        <dbReference type="Rhea" id="RHEA-COMP:10731"/>
        <dbReference type="ChEBI" id="CHEBI:15378"/>
        <dbReference type="ChEBI" id="CHEBI:29969"/>
        <dbReference type="ChEBI" id="CHEBI:57287"/>
        <dbReference type="ChEBI" id="CHEBI:57288"/>
        <dbReference type="ChEBI" id="CHEBI:61930"/>
        <dbReference type="EC" id="2.3.1.48"/>
    </reaction>
</comment>
<comment type="subunit">
    <text evidence="2 6 8 9 10 11 12">Interacts with PPARA; the interaction is direct (By similarity). Interacts with PPARG; the interaction is direct (By similarity). Interacts with ESRRG; the interaction is direct (By similarity). Interacts with STAT5A (via FDL motif) (By similarity). Interacts with STAT5B (via FDL motif) (By similarity). Interacts with STAT6 (via LXXLL motif) (PubMed:14757047). Interacts (via LXXLL 1, 2 and 3 motifs) with RORC (via AF-2 motif) (PubMed:16148126). Interacts with ASXL1 (By similarity). Interacts with the methyltransferase CARM1 (PubMed:10381882). Interacts with COPS5 (By similarity). Interacts with the histone acetyltransferase CREBBP (PubMed:8616895). Interacts with DDX5 (By similarity). Interacts with the histone acetyltransferase EP300 (PubMed:8616895, PubMed:8855229). Interacts with ESR1 (By similarity). Interacts with GCCR (By similarity). Interacts with the basal transcription factor GTF2B (By similarity). Interacts with NCOA6 (By similarity). Interacts with NCOA2 (By similarity). Interacts with NR3C1 (By similarity). Interacts with NR4A1/Nur77 (By similarity). Interacts with NR4A3 (PubMed:12709428). Interacts with PCAF (By similarity). Interacts with PGR (By similarity). Interacts with PRMT2 (By similarity). Interacts with PRMT6 (By similarity). Interacts with PSMB9 (By similarity). Interacts with RXRA, the interaction is ligand-dependent (By similarity). Interacts with STAT3 following IL-6 stimulation (By similarity). Interacts with TRA (By similarity). Interacts with TRIP4 (By similarity). Interacts with TTLL5/STAMP (By similarity). Interacts with UBE2L3; they functionally interact to regulate progesterone receptor transcriptional activity (By similarity). Interacts with VDR (By similarity).</text>
</comment>
<comment type="subcellular location">
    <subcellularLocation>
        <location evidence="4 12">Nucleus</location>
    </subcellularLocation>
</comment>
<comment type="alternative products">
    <event type="alternative splicing"/>
    <isoform>
        <id>P70365-1</id>
        <name>1</name>
        <name>SRC-1A</name>
        <name>SRC1a</name>
        <sequence type="displayed"/>
    </isoform>
    <isoform>
        <id>P70365-2</id>
        <name>2</name>
        <name>SRC-1E</name>
        <name>SRC1e</name>
        <sequence type="described" ref="VSP_011740"/>
    </isoform>
    <isoform>
        <id>P70365-3</id>
        <name>3</name>
        <sequence type="described" ref="VSP_011741"/>
    </isoform>
    <isoform>
        <id>P70365-4</id>
        <name>4</name>
        <sequence type="described" ref="VSP_027855 VSP_027856"/>
    </isoform>
</comment>
<comment type="tissue specificity">
    <text evidence="12 13">Widely expressed.</text>
</comment>
<comment type="domain">
    <text evidence="1">The C-terminal (1113-1447) part mediates the histone acetyltransferase (HAT) activity.</text>
</comment>
<comment type="domain">
    <text>Contains 7 Leu-Xaa-Xaa-Leu-Leu (LXXLL) motifs. LXXLL motifs 3, 4 and 5 are essential for the association with nuclear receptors. LXXLL motif 7, which is not present in isoform 2, increases the affinity for steroid receptors in vitro.</text>
</comment>
<comment type="PTM">
    <text evidence="1">Sumoylated; sumoylation increases its interaction with PGR and prolongs its retention in the nucleus. It does not prevent its ubiquitination and does not exert a clear effect on the stability of the protein (By similarity).</text>
</comment>
<comment type="PTM">
    <text evidence="1">Ubiquitinated; leading to proteasome-mediated degradation. Ubiquitination and sumoylation take place at different sites (By similarity).</text>
</comment>
<comment type="disruption phenotype">
    <text evidence="14">Mice show partial hormone resistance: target organs such as uterus, prostate, testis and mammary gland exhibiting decreased growth and development in response to steroid hormones. Moreover, such mice are prone to obesity due to reduced energy expenditure.</text>
</comment>
<comment type="similarity">
    <text evidence="19">Belongs to the SRC/p160 nuclear receptor coactivator family.</text>
</comment>
<organism>
    <name type="scientific">Mus musculus</name>
    <name type="common">Mouse</name>
    <dbReference type="NCBI Taxonomy" id="10090"/>
    <lineage>
        <taxon>Eukaryota</taxon>
        <taxon>Metazoa</taxon>
        <taxon>Chordata</taxon>
        <taxon>Craniata</taxon>
        <taxon>Vertebrata</taxon>
        <taxon>Euteleostomi</taxon>
        <taxon>Mammalia</taxon>
        <taxon>Eutheria</taxon>
        <taxon>Euarchontoglires</taxon>
        <taxon>Glires</taxon>
        <taxon>Rodentia</taxon>
        <taxon>Myomorpha</taxon>
        <taxon>Muroidea</taxon>
        <taxon>Muridae</taxon>
        <taxon>Murinae</taxon>
        <taxon>Mus</taxon>
        <taxon>Mus</taxon>
    </lineage>
</organism>
<feature type="initiator methionine" description="Removed" evidence="2">
    <location>
        <position position="1"/>
    </location>
</feature>
<feature type="chain" id="PRO_0000094401" description="Nuclear receptor coactivator 1">
    <location>
        <begin position="2"/>
        <end position="1447"/>
    </location>
</feature>
<feature type="domain" description="bHLH" evidence="4">
    <location>
        <begin position="23"/>
        <end position="80"/>
    </location>
</feature>
<feature type="domain" description="PAS" evidence="3">
    <location>
        <begin position="109"/>
        <end position="180"/>
    </location>
</feature>
<feature type="region of interest" description="Disordered" evidence="5">
    <location>
        <begin position="1"/>
        <end position="39"/>
    </location>
</feature>
<feature type="region of interest" description="Disordered" evidence="5">
    <location>
        <begin position="83"/>
        <end position="105"/>
    </location>
</feature>
<feature type="region of interest" description="Interaction with STAT3">
    <location>
        <begin position="361"/>
        <end position="568"/>
    </location>
</feature>
<feature type="region of interest" description="Disordered" evidence="5">
    <location>
        <begin position="368"/>
        <end position="446"/>
    </location>
</feature>
<feature type="region of interest" description="Disordered" evidence="5">
    <location>
        <begin position="459"/>
        <end position="478"/>
    </location>
</feature>
<feature type="region of interest" description="Disordered" evidence="5">
    <location>
        <begin position="548"/>
        <end position="632"/>
    </location>
</feature>
<feature type="region of interest" description="Disordered" evidence="5">
    <location>
        <begin position="663"/>
        <end position="688"/>
    </location>
</feature>
<feature type="region of interest" description="Disordered" evidence="5">
    <location>
        <begin position="700"/>
        <end position="735"/>
    </location>
</feature>
<feature type="region of interest" description="Interaction with CREBBP" evidence="11">
    <location>
        <begin position="787"/>
        <end position="994"/>
    </location>
</feature>
<feature type="region of interest" description="Disordered" evidence="5">
    <location>
        <begin position="1166"/>
        <end position="1195"/>
    </location>
</feature>
<feature type="region of interest" description="Disordered" evidence="5">
    <location>
        <begin position="1268"/>
        <end position="1287"/>
    </location>
</feature>
<feature type="region of interest" description="Disordered" evidence="5">
    <location>
        <begin position="1415"/>
        <end position="1447"/>
    </location>
</feature>
<feature type="short sequence motif" description="LXXLL motif 1">
    <location>
        <begin position="46"/>
        <end position="50"/>
    </location>
</feature>
<feature type="short sequence motif" description="LXXLL motif 2">
    <location>
        <begin position="112"/>
        <end position="116"/>
    </location>
</feature>
<feature type="short sequence motif" description="LXXLL motif 3">
    <location>
        <begin position="637"/>
        <end position="641"/>
    </location>
</feature>
<feature type="short sequence motif" description="LXXLL motif 4">
    <location>
        <begin position="694"/>
        <end position="698"/>
    </location>
</feature>
<feature type="short sequence motif" description="LXXLL motif 5">
    <location>
        <begin position="755"/>
        <end position="759"/>
    </location>
</feature>
<feature type="short sequence motif" description="LXXLL motif 6">
    <location>
        <begin position="919"/>
        <end position="923"/>
    </location>
</feature>
<feature type="short sequence motif" description="LXXLL motif 7">
    <location>
        <begin position="1441"/>
        <end position="1445"/>
    </location>
</feature>
<feature type="compositionally biased region" description="Polar residues" evidence="5">
    <location>
        <begin position="1"/>
        <end position="11"/>
    </location>
</feature>
<feature type="compositionally biased region" description="Basic and acidic residues" evidence="5">
    <location>
        <begin position="83"/>
        <end position="96"/>
    </location>
</feature>
<feature type="compositionally biased region" description="Polar residues" evidence="5">
    <location>
        <begin position="371"/>
        <end position="381"/>
    </location>
</feature>
<feature type="compositionally biased region" description="Polar residues" evidence="5">
    <location>
        <begin position="401"/>
        <end position="414"/>
    </location>
</feature>
<feature type="compositionally biased region" description="Low complexity" evidence="5">
    <location>
        <begin position="419"/>
        <end position="441"/>
    </location>
</feature>
<feature type="compositionally biased region" description="Low complexity" evidence="5">
    <location>
        <begin position="465"/>
        <end position="476"/>
    </location>
</feature>
<feature type="compositionally biased region" description="Polar residues" evidence="5">
    <location>
        <begin position="564"/>
        <end position="575"/>
    </location>
</feature>
<feature type="compositionally biased region" description="Polar residues" evidence="5">
    <location>
        <begin position="596"/>
        <end position="607"/>
    </location>
</feature>
<feature type="compositionally biased region" description="Basic and acidic residues" evidence="5">
    <location>
        <begin position="619"/>
        <end position="628"/>
    </location>
</feature>
<feature type="compositionally biased region" description="Low complexity" evidence="5">
    <location>
        <begin position="663"/>
        <end position="679"/>
    </location>
</feature>
<feature type="compositionally biased region" description="Polar residues" evidence="5">
    <location>
        <begin position="701"/>
        <end position="710"/>
    </location>
</feature>
<feature type="compositionally biased region" description="Low complexity" evidence="5">
    <location>
        <begin position="724"/>
        <end position="735"/>
    </location>
</feature>
<feature type="compositionally biased region" description="Low complexity" evidence="5">
    <location>
        <begin position="1271"/>
        <end position="1281"/>
    </location>
</feature>
<feature type="compositionally biased region" description="Low complexity" evidence="5">
    <location>
        <begin position="1431"/>
        <end position="1447"/>
    </location>
</feature>
<feature type="modified residue" description="N-acetylserine" evidence="2">
    <location>
        <position position="2"/>
    </location>
</feature>
<feature type="modified residue" description="Phosphoserine" evidence="21 22">
    <location>
        <position position="22"/>
    </location>
</feature>
<feature type="modified residue" description="Phosphoserine" evidence="21">
    <location>
        <position position="372"/>
    </location>
</feature>
<feature type="modified residue" description="Phosphoserine" evidence="2">
    <location>
        <position position="395"/>
    </location>
</feature>
<feature type="modified residue" description="Phosphoserine" evidence="2">
    <location>
        <position position="518"/>
    </location>
</feature>
<feature type="modified residue" description="Phosphoserine" evidence="22">
    <location>
        <position position="559"/>
    </location>
</feature>
<feature type="modified residue" description="Phosphoserine" evidence="2">
    <location>
        <position position="570"/>
    </location>
</feature>
<feature type="modified residue" description="Phosphoserine" evidence="21">
    <location>
        <position position="702"/>
    </location>
</feature>
<feature type="modified residue" description="Phosphoserine" evidence="2">
    <location>
        <position position="1039"/>
    </location>
</feature>
<feature type="modified residue" description="Asymmetric dimethylarginine" evidence="23">
    <location>
        <position position="1079"/>
    </location>
</feature>
<feature type="modified residue" description="Asymmetric dimethylarginine" evidence="23">
    <location>
        <position position="1097"/>
    </location>
</feature>
<feature type="modified residue" description="Asymmetric dimethylarginine" evidence="23">
    <location>
        <position position="1130"/>
    </location>
</feature>
<feature type="modified residue" description="Asymmetric dimethylarginine" evidence="23">
    <location>
        <position position="1137"/>
    </location>
</feature>
<feature type="modified residue" description="Phosphothreonine" evidence="2">
    <location>
        <position position="1185"/>
    </location>
</feature>
<feature type="modified residue" description="Phosphoserine" evidence="2">
    <location>
        <position position="1191"/>
    </location>
</feature>
<feature type="modified residue" description="Phosphoserine" evidence="2">
    <location>
        <position position="1378"/>
    </location>
</feature>
<feature type="cross-link" description="Glycyl lysine isopeptide (Lys-Gly) (interchain with G-Cter in SUMO)" evidence="1">
    <location>
        <position position="738"/>
    </location>
</feature>
<feature type="cross-link" description="Glycyl lysine isopeptide (Lys-Gly) (interchain with G-Cter in SUMO)" evidence="1">
    <location>
        <position position="780"/>
    </location>
</feature>
<feature type="cross-link" description="Glycyl lysine isopeptide (Lys-Gly) (interchain with G-Cter in SUMO2)" evidence="2">
    <location>
        <position position="852"/>
    </location>
</feature>
<feature type="splice variant" id="VSP_027855" description="In isoform 4." evidence="15">
    <original>NVFSQAVQSQPAPAQPGVYNNMSITVSMAGGNANIQNMNPMMGQMQMSSLQMPGMNTVCSEQMNDPALRHTGLYCNQ</original>
    <variation>KWKRKHSEHESNDGPDANELSADARDEYCVL</variation>
    <location>
        <begin position="1300"/>
        <end position="1376"/>
    </location>
</feature>
<feature type="splice variant" id="VSP_027856" description="In isoform 4." evidence="15">
    <location>
        <begin position="1377"/>
        <end position="1447"/>
    </location>
</feature>
<feature type="splice variant" id="VSP_011740" description="In isoform 2." evidence="15 17 18">
    <original>QVQQVQVFADVQCTVNLVGGDPYLNQPGPLGTQKPTSGPQTPQAQQKSLLQQLLTE</original>
    <variation>DKKTEEFFSVVTTD</variation>
    <location>
        <begin position="1392"/>
        <end position="1447"/>
    </location>
</feature>
<feature type="splice variant" id="VSP_011741" description="In isoform 3." evidence="16">
    <original>QVQQVQVFADVQCTVNLVGGDPYLNQPGPLGTQKPTSGPQTPQAQQKSLLQQLLTE</original>
    <variation>VSKKDNPSAELADSITLDTWRTSHGIC</variation>
    <location>
        <begin position="1392"/>
        <end position="1447"/>
    </location>
</feature>
<feature type="mutagenesis site" description="Abolishes the interactions with estrogen and retinoid-acids receptors." evidence="13">
    <original>HRLL</original>
    <variation>AAAA</variation>
    <location>
        <begin position="695"/>
        <end position="698"/>
    </location>
</feature>
<feature type="mutagenesis site" description="Abolishes the interactions with estrogen and retinoid-acids receptors." evidence="13">
    <original>RYLL</original>
    <variation>AAAA</variation>
    <location>
        <begin position="756"/>
        <end position="759"/>
    </location>
</feature>
<feature type="sequence conflict" description="In Ref. 1; AAB01228." evidence="19" ref="1">
    <original>E</original>
    <variation>G</variation>
    <location>
        <position position="45"/>
    </location>
</feature>
<feature type="sequence conflict" description="In Ref. 2; AAB06177." evidence="19" ref="2">
    <original>C</original>
    <variation>R</variation>
    <location>
        <position position="223"/>
    </location>
</feature>
<feature type="sequence conflict" description="In Ref. 2; AAB06177." evidence="19" ref="2">
    <original>E</original>
    <variation>G</variation>
    <location>
        <position position="234"/>
    </location>
</feature>
<feature type="sequence conflict" description="In Ref. 5; AAH80866." evidence="19" ref="5">
    <original>E</original>
    <variation>K</variation>
    <location>
        <position position="237"/>
    </location>
</feature>
<feature type="sequence conflict" description="In Ref. 1; AAB01228." evidence="19" ref="1">
    <original>SS</original>
    <variation>TT</variation>
    <location>
        <begin position="465"/>
        <end position="466"/>
    </location>
</feature>
<feature type="sequence conflict" description="In Ref. 2; AAB06177." evidence="19" ref="2">
    <original>Q</original>
    <variation>P</variation>
    <location>
        <position position="699"/>
    </location>
</feature>
<feature type="sequence conflict" description="In Ref. 4; BAC29244." evidence="19" ref="4">
    <original>L</original>
    <variation>M</variation>
    <location>
        <position position="1115"/>
    </location>
</feature>
<feature type="sequence conflict" description="In Ref. 1; AAB01228." evidence="19" ref="1">
    <original>R</original>
    <variation>K</variation>
    <location>
        <position position="1130"/>
    </location>
</feature>
<feature type="sequence conflict" description="In Ref. 1; AAB01228." evidence="19" ref="1">
    <original>RA</original>
    <variation>KP</variation>
    <location>
        <begin position="1137"/>
        <end position="1138"/>
    </location>
</feature>
<feature type="sequence conflict" description="In Ref. 1; AAB01228." evidence="19" ref="1">
    <original>R</original>
    <variation>K</variation>
    <location>
        <position position="1142"/>
    </location>
</feature>
<feature type="sequence conflict" description="In Ref. 1; AAB01228." evidence="19" ref="1">
    <original>T</original>
    <variation>D</variation>
    <location>
        <position position="1162"/>
    </location>
</feature>
<feature type="sequence conflict" description="In Ref. 2; AAB06177." evidence="19" ref="2">
    <original>R</original>
    <variation>S</variation>
    <location>
        <position position="1164"/>
    </location>
</feature>
<feature type="sequence conflict" description="In Ref. 1; AAB01228." evidence="19" ref="1">
    <original>P</original>
    <variation>L</variation>
    <location>
        <position position="1166"/>
    </location>
</feature>
<feature type="strand" evidence="24">
    <location>
        <begin position="261"/>
        <end position="266"/>
    </location>
</feature>
<feature type="strand" evidence="24">
    <location>
        <begin position="272"/>
        <end position="276"/>
    </location>
</feature>
<feature type="helix" evidence="24">
    <location>
        <begin position="278"/>
        <end position="281"/>
    </location>
</feature>
<feature type="helix" evidence="24">
    <location>
        <begin position="288"/>
        <end position="299"/>
    </location>
</feature>
<feature type="helix" evidence="24">
    <location>
        <begin position="309"/>
        <end position="320"/>
    </location>
</feature>
<feature type="strand" evidence="24">
    <location>
        <begin position="321"/>
        <end position="324"/>
    </location>
</feature>
<feature type="strand" evidence="24">
    <location>
        <begin position="328"/>
        <end position="331"/>
    </location>
</feature>
<feature type="strand" evidence="24">
    <location>
        <begin position="337"/>
        <end position="347"/>
    </location>
</feature>
<feature type="strand" evidence="24">
    <location>
        <begin position="357"/>
        <end position="365"/>
    </location>
</feature>
<feature type="turn" evidence="25">
    <location>
        <begin position="687"/>
        <end position="690"/>
    </location>
</feature>
<feature type="helix" evidence="26">
    <location>
        <begin position="693"/>
        <end position="699"/>
    </location>
</feature>
<reference key="1">
    <citation type="journal article" date="1996" name="Cell">
        <title>A CBP integrator complex mediates transcriptional activation and AP-1 inhibition by nuclear receptors.</title>
        <authorList>
            <person name="Kamei Y."/>
            <person name="Xu L."/>
            <person name="Heinzel T."/>
            <person name="Torchia J."/>
            <person name="Kurokawa R."/>
            <person name="Gloss B."/>
            <person name="Lin S.-C."/>
            <person name="Heyman R.A."/>
            <person name="Rose D.W."/>
            <person name="Glass C.K."/>
            <person name="Rosenfeld M.G."/>
        </authorList>
    </citation>
    <scope>NUCLEOTIDE SEQUENCE [MRNA] (ISOFORM 2)</scope>
    <scope>FUNCTION</scope>
    <scope>INTERACTION WITH EP300 AND CREBBP</scope>
</reference>
<reference key="2">
    <citation type="journal article" date="1996" name="Gene Expr.">
        <title>Cloning and identification of mouse steroid receptor coactivator-1 (mSRC-1), as a coactivator of peroxisome proliferator-activated receptor gamma.</title>
        <authorList>
            <person name="Zhu Y."/>
            <person name="Qi C."/>
            <person name="Calandra C."/>
            <person name="Rao M.S."/>
            <person name="Reddy J.K."/>
        </authorList>
    </citation>
    <scope>NUCLEOTIDE SEQUENCE [MRNA] (ISOFORM 1)</scope>
</reference>
<reference key="3">
    <citation type="journal article" date="1996" name="Proc. Natl. Acad. Sci. U.S.A.">
        <title>The nuclear hormone receptor coactivator SRC-1 is a specific target of p300.</title>
        <authorList>
            <person name="Yao T.-P."/>
            <person name="Ku G."/>
            <person name="Zhou N."/>
            <person name="Scully R."/>
            <person name="Livingston D.M."/>
        </authorList>
    </citation>
    <scope>NUCLEOTIDE SEQUENCE [MRNA] (ISOFORM 2)</scope>
    <scope>SUBCELLULAR LOCATION</scope>
    <scope>TISSUE SPECIFICITY</scope>
    <scope>INTERACTION WITH EP300 AND RAR</scope>
</reference>
<reference key="4">
    <citation type="journal article" date="2005" name="Science">
        <title>The transcriptional landscape of the mammalian genome.</title>
        <authorList>
            <person name="Carninci P."/>
            <person name="Kasukawa T."/>
            <person name="Katayama S."/>
            <person name="Gough J."/>
            <person name="Frith M.C."/>
            <person name="Maeda N."/>
            <person name="Oyama R."/>
            <person name="Ravasi T."/>
            <person name="Lenhard B."/>
            <person name="Wells C."/>
            <person name="Kodzius R."/>
            <person name="Shimokawa K."/>
            <person name="Bajic V.B."/>
            <person name="Brenner S.E."/>
            <person name="Batalov S."/>
            <person name="Forrest A.R."/>
            <person name="Zavolan M."/>
            <person name="Davis M.J."/>
            <person name="Wilming L.G."/>
            <person name="Aidinis V."/>
            <person name="Allen J.E."/>
            <person name="Ambesi-Impiombato A."/>
            <person name="Apweiler R."/>
            <person name="Aturaliya R.N."/>
            <person name="Bailey T.L."/>
            <person name="Bansal M."/>
            <person name="Baxter L."/>
            <person name="Beisel K.W."/>
            <person name="Bersano T."/>
            <person name="Bono H."/>
            <person name="Chalk A.M."/>
            <person name="Chiu K.P."/>
            <person name="Choudhary V."/>
            <person name="Christoffels A."/>
            <person name="Clutterbuck D.R."/>
            <person name="Crowe M.L."/>
            <person name="Dalla E."/>
            <person name="Dalrymple B.P."/>
            <person name="de Bono B."/>
            <person name="Della Gatta G."/>
            <person name="di Bernardo D."/>
            <person name="Down T."/>
            <person name="Engstrom P."/>
            <person name="Fagiolini M."/>
            <person name="Faulkner G."/>
            <person name="Fletcher C.F."/>
            <person name="Fukushima T."/>
            <person name="Furuno M."/>
            <person name="Futaki S."/>
            <person name="Gariboldi M."/>
            <person name="Georgii-Hemming P."/>
            <person name="Gingeras T.R."/>
            <person name="Gojobori T."/>
            <person name="Green R.E."/>
            <person name="Gustincich S."/>
            <person name="Harbers M."/>
            <person name="Hayashi Y."/>
            <person name="Hensch T.K."/>
            <person name="Hirokawa N."/>
            <person name="Hill D."/>
            <person name="Huminiecki L."/>
            <person name="Iacono M."/>
            <person name="Ikeo K."/>
            <person name="Iwama A."/>
            <person name="Ishikawa T."/>
            <person name="Jakt M."/>
            <person name="Kanapin A."/>
            <person name="Katoh M."/>
            <person name="Kawasawa Y."/>
            <person name="Kelso J."/>
            <person name="Kitamura H."/>
            <person name="Kitano H."/>
            <person name="Kollias G."/>
            <person name="Krishnan S.P."/>
            <person name="Kruger A."/>
            <person name="Kummerfeld S.K."/>
            <person name="Kurochkin I.V."/>
            <person name="Lareau L.F."/>
            <person name="Lazarevic D."/>
            <person name="Lipovich L."/>
            <person name="Liu J."/>
            <person name="Liuni S."/>
            <person name="McWilliam S."/>
            <person name="Madan Babu M."/>
            <person name="Madera M."/>
            <person name="Marchionni L."/>
            <person name="Matsuda H."/>
            <person name="Matsuzawa S."/>
            <person name="Miki H."/>
            <person name="Mignone F."/>
            <person name="Miyake S."/>
            <person name="Morris K."/>
            <person name="Mottagui-Tabar S."/>
            <person name="Mulder N."/>
            <person name="Nakano N."/>
            <person name="Nakauchi H."/>
            <person name="Ng P."/>
            <person name="Nilsson R."/>
            <person name="Nishiguchi S."/>
            <person name="Nishikawa S."/>
            <person name="Nori F."/>
            <person name="Ohara O."/>
            <person name="Okazaki Y."/>
            <person name="Orlando V."/>
            <person name="Pang K.C."/>
            <person name="Pavan W.J."/>
            <person name="Pavesi G."/>
            <person name="Pesole G."/>
            <person name="Petrovsky N."/>
            <person name="Piazza S."/>
            <person name="Reed J."/>
            <person name="Reid J.F."/>
            <person name="Ring B.Z."/>
            <person name="Ringwald M."/>
            <person name="Rost B."/>
            <person name="Ruan Y."/>
            <person name="Salzberg S.L."/>
            <person name="Sandelin A."/>
            <person name="Schneider C."/>
            <person name="Schoenbach C."/>
            <person name="Sekiguchi K."/>
            <person name="Semple C.A."/>
            <person name="Seno S."/>
            <person name="Sessa L."/>
            <person name="Sheng Y."/>
            <person name="Shibata Y."/>
            <person name="Shimada H."/>
            <person name="Shimada K."/>
            <person name="Silva D."/>
            <person name="Sinclair B."/>
            <person name="Sperling S."/>
            <person name="Stupka E."/>
            <person name="Sugiura K."/>
            <person name="Sultana R."/>
            <person name="Takenaka Y."/>
            <person name="Taki K."/>
            <person name="Tammoja K."/>
            <person name="Tan S.L."/>
            <person name="Tang S."/>
            <person name="Taylor M.S."/>
            <person name="Tegner J."/>
            <person name="Teichmann S.A."/>
            <person name="Ueda H.R."/>
            <person name="van Nimwegen E."/>
            <person name="Verardo R."/>
            <person name="Wei C.L."/>
            <person name="Yagi K."/>
            <person name="Yamanishi H."/>
            <person name="Zabarovsky E."/>
            <person name="Zhu S."/>
            <person name="Zimmer A."/>
            <person name="Hide W."/>
            <person name="Bult C."/>
            <person name="Grimmond S.M."/>
            <person name="Teasdale R.D."/>
            <person name="Liu E.T."/>
            <person name="Brusic V."/>
            <person name="Quackenbush J."/>
            <person name="Wahlestedt C."/>
            <person name="Mattick J.S."/>
            <person name="Hume D.A."/>
            <person name="Kai C."/>
            <person name="Sasaki D."/>
            <person name="Tomaru Y."/>
            <person name="Fukuda S."/>
            <person name="Kanamori-Katayama M."/>
            <person name="Suzuki M."/>
            <person name="Aoki J."/>
            <person name="Arakawa T."/>
            <person name="Iida J."/>
            <person name="Imamura K."/>
            <person name="Itoh M."/>
            <person name="Kato T."/>
            <person name="Kawaji H."/>
            <person name="Kawagashira N."/>
            <person name="Kawashima T."/>
            <person name="Kojima M."/>
            <person name="Kondo S."/>
            <person name="Konno H."/>
            <person name="Nakano K."/>
            <person name="Ninomiya N."/>
            <person name="Nishio T."/>
            <person name="Okada M."/>
            <person name="Plessy C."/>
            <person name="Shibata K."/>
            <person name="Shiraki T."/>
            <person name="Suzuki S."/>
            <person name="Tagami M."/>
            <person name="Waki K."/>
            <person name="Watahiki A."/>
            <person name="Okamura-Oho Y."/>
            <person name="Suzuki H."/>
            <person name="Kawai J."/>
            <person name="Hayashizaki Y."/>
        </authorList>
    </citation>
    <scope>NUCLEOTIDE SEQUENCE [LARGE SCALE MRNA] (ISOFORM 3)</scope>
    <source>
        <strain>C57BL/6J</strain>
        <tissue>Cerebellum</tissue>
    </source>
</reference>
<reference key="5">
    <citation type="journal article" date="2004" name="Genome Res.">
        <title>The status, quality, and expansion of the NIH full-length cDNA project: the Mammalian Gene Collection (MGC).</title>
        <authorList>
            <consortium name="The MGC Project Team"/>
        </authorList>
    </citation>
    <scope>NUCLEOTIDE SEQUENCE [LARGE SCALE MRNA] (ISOFORMS 2 AND 4)</scope>
    <source>
        <strain>C57BL/6J</strain>
        <tissue>Brain</tissue>
        <tissue>Eye</tissue>
    </source>
</reference>
<reference key="6">
    <citation type="submission" date="2009-01" db="UniProtKB">
        <authorList>
            <person name="Lubec G."/>
            <person name="Sunyer B."/>
            <person name="Chen W.-Q."/>
        </authorList>
    </citation>
    <scope>PROTEIN SEQUENCE OF 21-33</scope>
    <scope>IDENTIFICATION BY MASS SPECTROMETRY</scope>
    <source>
        <strain>OF1</strain>
        <tissue>Hippocampus</tissue>
    </source>
</reference>
<reference key="7">
    <citation type="journal article" date="1997" name="Nature">
        <title>The transcriptional co-activator p/CIP binds CBP and mediates nuclear-receptor function.</title>
        <authorList>
            <person name="Torchia J."/>
            <person name="Rose D.W."/>
            <person name="Inostroza J."/>
            <person name="Kamei Y."/>
            <person name="Westin S."/>
            <person name="Glass C.K."/>
            <person name="Rosenfeld M.G."/>
        </authorList>
    </citation>
    <scope>ROLE OF LXXLL MOTIFS</scope>
    <scope>TISSUE SPECIFICITY</scope>
    <scope>MUTAGENESIS OF 695-HIS--LEU-698 AND 756-ARG--LEU-759</scope>
</reference>
<reference key="8">
    <citation type="journal article" date="1998" name="Science">
        <title>Partial hormone resistance in mice with disruption of the steroid receptor coactivator-1 (SRC-1) gene.</title>
        <authorList>
            <person name="Xu J."/>
            <person name="Qiu Y."/>
            <person name="DeMayo F.J."/>
            <person name="Tsai S.Y."/>
            <person name="Tsai M.-J."/>
            <person name="O'Malley B.W."/>
        </authorList>
    </citation>
    <scope>FUNCTION</scope>
    <scope>DISRUPTION PHENOTYPE</scope>
</reference>
<reference key="9">
    <citation type="journal article" date="1999" name="Science">
        <title>Regulation of transcription by a protein methyltransferase.</title>
        <authorList>
            <person name="Chen D."/>
            <person name="Ma H."/>
            <person name="Hong H."/>
            <person name="Koh S.S."/>
            <person name="Huang S.-M."/>
            <person name="Schurter B.T."/>
            <person name="Aswad D.W."/>
            <person name="Stallcup M.R."/>
        </authorList>
    </citation>
    <scope>INTERACTION WITH CARM1</scope>
</reference>
<reference key="10">
    <citation type="journal article" date="2002" name="Cell">
        <title>SRC-1 and TIF2 control energy balance between white and brown adipose tissues.</title>
        <authorList>
            <person name="Picard F."/>
            <person name="Gehin M."/>
            <person name="Annicotte J.-S."/>
            <person name="Rocchi S."/>
            <person name="Champy M.-F."/>
            <person name="O'Malley B.W."/>
            <person name="Chambon P."/>
            <person name="Auwerx J."/>
        </authorList>
    </citation>
    <scope>FUNCTION</scope>
</reference>
<reference key="11">
    <citation type="journal article" date="2003" name="J. Biol. Chem.">
        <title>The AF-1 domain of the orphan nuclear receptor NOR-1 mediates trans-activation, coactivator recruitment, and activation by the purine anti-metabolite 6-mercaptopurine.</title>
        <authorList>
            <person name="Wansa K.D."/>
            <person name="Harris J.M."/>
            <person name="Yan G."/>
            <person name="Ordentlich P."/>
            <person name="Muscat G.E."/>
        </authorList>
    </citation>
    <scope>INTERACTION WITH NR4A3</scope>
</reference>
<reference key="12">
    <citation type="journal article" date="2005" name="J. Immunol.">
        <title>RORgammat recruits steroid receptor coactivators to ensure thymocyte survival.</title>
        <authorList>
            <person name="Xie H."/>
            <person name="Sadim M.S."/>
            <person name="Sun Z."/>
        </authorList>
    </citation>
    <scope>FUNCTION AS COACTIVATOR</scope>
    <scope>INTERACTION WITH RORC</scope>
</reference>
<reference key="13">
    <citation type="journal article" date="2009" name="Immunity">
        <title>The phagosomal proteome in interferon-gamma-activated macrophages.</title>
        <authorList>
            <person name="Trost M."/>
            <person name="English L."/>
            <person name="Lemieux S."/>
            <person name="Courcelles M."/>
            <person name="Desjardins M."/>
            <person name="Thibault P."/>
        </authorList>
    </citation>
    <scope>PHOSPHORYLATION [LARGE SCALE ANALYSIS] AT SER-22; SER-372 AND SER-702</scope>
    <scope>IDENTIFICATION BY MASS SPECTROMETRY [LARGE SCALE ANALYSIS]</scope>
</reference>
<reference key="14">
    <citation type="journal article" date="2010" name="Cell">
        <title>A tissue-specific atlas of mouse protein phosphorylation and expression.</title>
        <authorList>
            <person name="Huttlin E.L."/>
            <person name="Jedrychowski M.P."/>
            <person name="Elias J.E."/>
            <person name="Goswami T."/>
            <person name="Rad R."/>
            <person name="Beausoleil S.A."/>
            <person name="Villen J."/>
            <person name="Haas W."/>
            <person name="Sowa M.E."/>
            <person name="Gygi S.P."/>
        </authorList>
    </citation>
    <scope>PHOSPHORYLATION [LARGE SCALE ANALYSIS] AT SER-22 AND SER-559</scope>
    <scope>IDENTIFICATION BY MASS SPECTROMETRY [LARGE SCALE ANALYSIS]</scope>
    <source>
        <tissue>Brain</tissue>
        <tissue>Kidney</tissue>
        <tissue>Lung</tissue>
        <tissue>Pancreas</tissue>
        <tissue>Spleen</tissue>
    </source>
</reference>
<reference key="15">
    <citation type="journal article" date="2014" name="Mol. Cell. Proteomics">
        <title>Immunoaffinity enrichment and mass spectrometry analysis of protein methylation.</title>
        <authorList>
            <person name="Guo A."/>
            <person name="Gu H."/>
            <person name="Zhou J."/>
            <person name="Mulhern D."/>
            <person name="Wang Y."/>
            <person name="Lee K.A."/>
            <person name="Yang V."/>
            <person name="Aguiar M."/>
            <person name="Kornhauser J."/>
            <person name="Jia X."/>
            <person name="Ren J."/>
            <person name="Beausoleil S.A."/>
            <person name="Silva J.C."/>
            <person name="Vemulapalli V."/>
            <person name="Bedford M.T."/>
            <person name="Comb M.J."/>
        </authorList>
    </citation>
    <scope>METHYLATION [LARGE SCALE ANALYSIS] AT ARG-1079; ARG-1097; ARG-1130 AND ARG-1137</scope>
    <scope>IDENTIFICATION BY MASS SPECTROMETRY [LARGE SCALE ANALYSIS]</scope>
    <source>
        <tissue>Brain</tissue>
        <tissue>Embryo</tissue>
    </source>
</reference>
<reference evidence="20" key="16">
    <citation type="journal article" date="2004" name="J. Mol. Biol.">
        <title>Structure of the NCoA-1/SRC-1 PAS-B domain bound to the LXXLL motif of the STAT6 transactivation domain.</title>
        <authorList>
            <person name="Razeto A."/>
            <person name="Ramakrishnan V."/>
            <person name="Litterst C.M."/>
            <person name="Giller K."/>
            <person name="Griesinger C."/>
            <person name="Carlomagno T."/>
            <person name="Lakomek N."/>
            <person name="Heimburg T."/>
            <person name="Lodrini M."/>
            <person name="Pfitzner E."/>
            <person name="Becker S."/>
        </authorList>
    </citation>
    <scope>X-RAY CRYSTALLOGRAPHY (2.2 ANGSTROMS) OF 257-385 IN COMPLEX WITH STAT6</scope>
</reference>
<protein>
    <recommendedName>
        <fullName>Nuclear receptor coactivator 1</fullName>
        <shortName>NCoA-1</shortName>
        <ecNumber>2.3.1.48</ecNumber>
    </recommendedName>
    <alternativeName>
        <fullName>Nuclear receptor coactivator protein 1</fullName>
        <shortName>mNRC-1</shortName>
    </alternativeName>
    <alternativeName>
        <fullName>Steroid receptor coactivator 1</fullName>
        <shortName>SRC-1</shortName>
    </alternativeName>
</protein>
<sequence length="1447" mass="157016">MSGLGDSSSDPANPDSHKRKGSPCDTLASSTEKRRREQENKYLEELAELLSANISDIDSLSVKPDKCKILKKTVDQIQLMKRMEQEKSTTDDDVQKSDISSSSQGVIEKESLGPLLLEALDGFFFVVNCEGRIVFVSENVTSYLGYNQEELMNTSVYSILHVGDHAEFVKNLLPKSLVNGVPWPQEATRRNSHTFNCRMLIHPPEDPGTENQEACQRYEVMQCFTVSQPKSIQEDGEDFQSCLICIARRLPRPPAITGVESFMTKQDTTGKIISIDTSSLRAAGRTGWEDLVRKCIYAFFQPQGREPSYARQLFQEVMTRGTASSPSYRFILNDGTMLSAHTKCKLCYPQSPDMQPFIMGIHIIDREHSGLSPQDDSNSGMSIPRINPSVNPGISPAHGVTRSSTLPPSNNNMVSARVNRQQSSDLNSSSSHTNSSNNQGNFGCSPGNQIVANVALNQGQAGSQSSNPSLNLNNSPMEGTGIALSQFMSPRRQANSGLATRARMSNNSFPPNIPTLSSPVGITSGACNNNNRSYSNIPVTSLQGMNEGPNNSVGFSAGSPVLRQMSSQNSPSRLSMQPAKAESKDSKEIASILNEMIQSDNSDNSANEGKPLDSGLLHNNDRLSEGDSKYSQTSHKLVQLLTTTAEQQLRHADIDTSCKDVLSCTGTSSSASSNPSGGTCPSSHSSLTERHKILHRLLQEGSPSDITTLSVEPEKKDSVPASTAVSVSGQSQGSASIKLELDAAKKKESKDHQLLRYLLDKDEKDLRSTPNLCLDDVKVKVEKKEQMDPCNTNPTPMTKPAPEEVKLESQSQFTADLDQFDQLLPTLEKAAQLPSLCETDRMDGAVTGVSIKAEVLPASLQPTTARAAPRLSRLPELELEAIDNQFGQPGAGDQIPWANNTLTTINQNKPEDQCISSQLDELLCPPTTVEGRNDEKALLEQLVSFLSGKDETELAELDRALGIDKLVQGGGLDVLSERFPPQQATPPLMMEDRPTLYSQPYSSPSPTAGLSGPFQGMVRQKPSLGAMPVQVTPPRGTFSPNMGMQPRQTLNRPPAAPNQLRLQLQQRLQGQQQLMHQNRQAILNQFAANAPVGMNMRSGMQQQITPQPPLNAQMLAQRQRELYSQQHRQRQIIQQQRAMLMRHQSFGNNIPPSSGLPVQMGTPRLPQGAPQQFPYPPNYGTNPGTPPASTSPFSQLAANPEASLATRSSMVNRGMAGNMGGQFGAGISPQMQQNVFQYPGPGLVPQGEATFAPSLSPGSSMVPMPVPPPQSSLLQQTPPTSGYQSPDMKAWQQGTMGNNNVFSQAVQSQPAPAQPGVYNNMSITVSMAGGNANIQNMNPMMGQMQMSSLQMPGMNTVCSEQMNDPALRHTGLYCNQLSSTDLLKTDADGNQQVQQVQVFADVQCTVNLVGGDPYLNQPGPLGTQKPTSGPQTPQAQQKSLLQQLLTE</sequence>
<proteinExistence type="evidence at protein level"/>
<name>NCOA1_MOUSE</name>
<evidence type="ECO:0000250" key="1"/>
<evidence type="ECO:0000250" key="2">
    <source>
        <dbReference type="UniProtKB" id="Q15788"/>
    </source>
</evidence>
<evidence type="ECO:0000255" key="3">
    <source>
        <dbReference type="PROSITE-ProRule" id="PRU00140"/>
    </source>
</evidence>
<evidence type="ECO:0000255" key="4">
    <source>
        <dbReference type="PROSITE-ProRule" id="PRU00981"/>
    </source>
</evidence>
<evidence type="ECO:0000256" key="5">
    <source>
        <dbReference type="SAM" id="MobiDB-lite"/>
    </source>
</evidence>
<evidence type="ECO:0000269" key="6">
    <source>
    </source>
</evidence>
<evidence type="ECO:0000269" key="7">
    <source>
    </source>
</evidence>
<evidence type="ECO:0000269" key="8">
    <source>
    </source>
</evidence>
<evidence type="ECO:0000269" key="9">
    <source>
    </source>
</evidence>
<evidence type="ECO:0000269" key="10">
    <source>
    </source>
</evidence>
<evidence type="ECO:0000269" key="11">
    <source>
    </source>
</evidence>
<evidence type="ECO:0000269" key="12">
    <source>
    </source>
</evidence>
<evidence type="ECO:0000269" key="13">
    <source>
    </source>
</evidence>
<evidence type="ECO:0000269" key="14">
    <source>
    </source>
</evidence>
<evidence type="ECO:0000303" key="15">
    <source>
    </source>
</evidence>
<evidence type="ECO:0000303" key="16">
    <source>
    </source>
</evidence>
<evidence type="ECO:0000303" key="17">
    <source>
    </source>
</evidence>
<evidence type="ECO:0000303" key="18">
    <source>
    </source>
</evidence>
<evidence type="ECO:0000305" key="19"/>
<evidence type="ECO:0007744" key="20">
    <source>
        <dbReference type="PDB" id="1OJ5"/>
    </source>
</evidence>
<evidence type="ECO:0007744" key="21">
    <source>
    </source>
</evidence>
<evidence type="ECO:0007744" key="22">
    <source>
    </source>
</evidence>
<evidence type="ECO:0007744" key="23">
    <source>
    </source>
</evidence>
<evidence type="ECO:0007829" key="24">
    <source>
        <dbReference type="PDB" id="1OJ5"/>
    </source>
</evidence>
<evidence type="ECO:0007829" key="25">
    <source>
        <dbReference type="PDB" id="2O9I"/>
    </source>
</evidence>
<evidence type="ECO:0007829" key="26">
    <source>
        <dbReference type="PDB" id="4DMA"/>
    </source>
</evidence>
<dbReference type="EC" id="2.3.1.48"/>
<dbReference type="EMBL" id="U56920">
    <property type="protein sequence ID" value="AAB01228.1"/>
    <property type="molecule type" value="mRNA"/>
</dbReference>
<dbReference type="EMBL" id="U64606">
    <property type="protein sequence ID" value="AAB06177.1"/>
    <property type="molecule type" value="mRNA"/>
</dbReference>
<dbReference type="EMBL" id="U64828">
    <property type="protein sequence ID" value="AAB38841.1"/>
    <property type="molecule type" value="mRNA"/>
</dbReference>
<dbReference type="EMBL" id="AK035922">
    <property type="protein sequence ID" value="BAC29244.1"/>
    <property type="molecule type" value="mRNA"/>
</dbReference>
<dbReference type="EMBL" id="BC068177">
    <property type="protein sequence ID" value="AAH68177.1"/>
    <property type="molecule type" value="mRNA"/>
</dbReference>
<dbReference type="EMBL" id="BC080866">
    <property type="protein sequence ID" value="AAH80866.1"/>
    <property type="molecule type" value="mRNA"/>
</dbReference>
<dbReference type="CCDS" id="CCDS25789.1">
    <molecule id="P70365-2"/>
</dbReference>
<dbReference type="RefSeq" id="NP_001395526.1">
    <molecule id="P70365-2"/>
    <property type="nucleotide sequence ID" value="NM_001408597.1"/>
</dbReference>
<dbReference type="RefSeq" id="NP_001395527.1">
    <molecule id="P70365-2"/>
    <property type="nucleotide sequence ID" value="NM_001408598.1"/>
</dbReference>
<dbReference type="RefSeq" id="NP_001395528.1">
    <molecule id="P70365-2"/>
    <property type="nucleotide sequence ID" value="NM_001408599.1"/>
</dbReference>
<dbReference type="RefSeq" id="NP_001395529.1">
    <molecule id="P70365-2"/>
    <property type="nucleotide sequence ID" value="NM_001408600.1"/>
</dbReference>
<dbReference type="RefSeq" id="NP_001395530.1">
    <molecule id="P70365-2"/>
    <property type="nucleotide sequence ID" value="NM_001408601.1"/>
</dbReference>
<dbReference type="RefSeq" id="NP_001395531.1">
    <molecule id="P70365-1"/>
    <property type="nucleotide sequence ID" value="NM_001408602.1"/>
</dbReference>
<dbReference type="RefSeq" id="NP_001395534.1">
    <molecule id="P70365-3"/>
    <property type="nucleotide sequence ID" value="NM_001408605.1"/>
</dbReference>
<dbReference type="RefSeq" id="NP_035011.1">
    <molecule id="P70365-2"/>
    <property type="nucleotide sequence ID" value="NM_010881.3"/>
</dbReference>
<dbReference type="RefSeq" id="XP_006515068.1">
    <property type="nucleotide sequence ID" value="XM_006515005.3"/>
</dbReference>
<dbReference type="RefSeq" id="XP_006515069.1">
    <molecule id="P70365-1"/>
    <property type="nucleotide sequence ID" value="XM_006515006.5"/>
</dbReference>
<dbReference type="RefSeq" id="XP_006515070.1">
    <molecule id="P70365-1"/>
    <property type="nucleotide sequence ID" value="XM_006515007.5"/>
</dbReference>
<dbReference type="RefSeq" id="XP_011242143.1">
    <property type="nucleotide sequence ID" value="XM_011243841.2"/>
</dbReference>
<dbReference type="RefSeq" id="XP_036013113.1">
    <molecule id="P70365-1"/>
    <property type="nucleotide sequence ID" value="XM_036157220.1"/>
</dbReference>
<dbReference type="PDB" id="1OJ5">
    <property type="method" value="X-ray"/>
    <property type="resolution" value="2.20 A"/>
    <property type="chains" value="A=257-385"/>
</dbReference>
<dbReference type="PDB" id="2O9I">
    <property type="method" value="X-ray"/>
    <property type="resolution" value="2.80 A"/>
    <property type="chains" value="C/D=686-700"/>
</dbReference>
<dbReference type="PDB" id="4DMA">
    <property type="method" value="X-ray"/>
    <property type="resolution" value="2.30 A"/>
    <property type="chains" value="E/F=690-704"/>
</dbReference>
<dbReference type="PDB" id="5NWX">
    <property type="method" value="X-ray"/>
    <property type="resolution" value="2.51 A"/>
    <property type="chains" value="A=257-385"/>
</dbReference>
<dbReference type="PDB" id="5Y7W">
    <property type="method" value="X-ray"/>
    <property type="resolution" value="2.25 A"/>
    <property type="chains" value="A/B=257-367"/>
</dbReference>
<dbReference type="PDBsum" id="1OJ5"/>
<dbReference type="PDBsum" id="2O9I"/>
<dbReference type="PDBsum" id="4DMA"/>
<dbReference type="PDBsum" id="5NWX"/>
<dbReference type="PDBsum" id="5Y7W"/>
<dbReference type="SMR" id="P70365"/>
<dbReference type="BioGRID" id="201707">
    <property type="interactions" value="16"/>
</dbReference>
<dbReference type="ComplexPortal" id="CPX-5343">
    <property type="entry name" value="RXRalpha-NCOA1 activated retinoic acid receptor complex"/>
</dbReference>
<dbReference type="ComplexPortal" id="CPX-644">
    <property type="entry name" value="PXR-NCOA1 activated nuclear receptor complex"/>
</dbReference>
<dbReference type="ComplexPortal" id="CPX-667">
    <property type="entry name" value="RARalpha-NCOA1 activated retinoic acid receptor complex"/>
</dbReference>
<dbReference type="ComplexPortal" id="CPX-864">
    <property type="entry name" value="PPARgamma-NCOA1 activated nuclear receptor complex"/>
</dbReference>
<dbReference type="CORUM" id="P70365"/>
<dbReference type="FunCoup" id="P70365">
    <property type="interactions" value="3529"/>
</dbReference>
<dbReference type="IntAct" id="P70365">
    <property type="interactions" value="3"/>
</dbReference>
<dbReference type="MINT" id="P70365"/>
<dbReference type="STRING" id="10090.ENSMUSP00000082971"/>
<dbReference type="GlyGen" id="P70365">
    <property type="glycosylation" value="7 sites, 1 O-linked glycan (5 sites)"/>
</dbReference>
<dbReference type="iPTMnet" id="P70365"/>
<dbReference type="PhosphoSitePlus" id="P70365"/>
<dbReference type="jPOST" id="P70365"/>
<dbReference type="PaxDb" id="10090-ENSMUSP00000082971"/>
<dbReference type="PeptideAtlas" id="P70365"/>
<dbReference type="ProteomicsDB" id="293632">
    <molecule id="P70365-1"/>
</dbReference>
<dbReference type="ProteomicsDB" id="293633">
    <molecule id="P70365-2"/>
</dbReference>
<dbReference type="ProteomicsDB" id="293634">
    <molecule id="P70365-3"/>
</dbReference>
<dbReference type="ProteomicsDB" id="293635">
    <molecule id="P70365-4"/>
</dbReference>
<dbReference type="Pumba" id="P70365"/>
<dbReference type="Antibodypedia" id="27525">
    <property type="antibodies" value="428 antibodies from 40 providers"/>
</dbReference>
<dbReference type="DNASU" id="17977"/>
<dbReference type="Ensembl" id="ENSMUST00000085814.5">
    <molecule id="P70365-2"/>
    <property type="protein sequence ID" value="ENSMUSP00000082971.4"/>
    <property type="gene ID" value="ENSMUSG00000020647.11"/>
</dbReference>
<dbReference type="Ensembl" id="ENSMUST00000217794.2">
    <molecule id="P70365-4"/>
    <property type="protein sequence ID" value="ENSMUSP00000151716.2"/>
    <property type="gene ID" value="ENSMUSG00000020647.11"/>
</dbReference>
<dbReference type="Ensembl" id="ENSMUST00000220434.2">
    <molecule id="P70365-1"/>
    <property type="protein sequence ID" value="ENSMUSP00000151358.2"/>
    <property type="gene ID" value="ENSMUSG00000020647.11"/>
</dbReference>
<dbReference type="GeneID" id="17977"/>
<dbReference type="KEGG" id="mmu:17977"/>
<dbReference type="UCSC" id="uc007mxr.2">
    <molecule id="P70365-1"/>
    <property type="organism name" value="mouse"/>
</dbReference>
<dbReference type="UCSC" id="uc007mxs.2">
    <molecule id="P70365-2"/>
    <property type="organism name" value="mouse"/>
</dbReference>
<dbReference type="AGR" id="MGI:1276523"/>
<dbReference type="CTD" id="8648"/>
<dbReference type="MGI" id="MGI:1276523">
    <property type="gene designation" value="Ncoa1"/>
</dbReference>
<dbReference type="VEuPathDB" id="HostDB:ENSMUSG00000020647"/>
<dbReference type="eggNOG" id="KOG3561">
    <property type="taxonomic scope" value="Eukaryota"/>
</dbReference>
<dbReference type="GeneTree" id="ENSGT00950000183021"/>
<dbReference type="HOGENOM" id="CLU_001988_0_0_1"/>
<dbReference type="InParanoid" id="P70365"/>
<dbReference type="OMA" id="SRTCPQQ"/>
<dbReference type="OrthoDB" id="10035882at2759"/>
<dbReference type="PhylomeDB" id="P70365"/>
<dbReference type="TreeFam" id="TF332652"/>
<dbReference type="Reactome" id="R-MMU-159418">
    <property type="pathway name" value="Recycling of bile acids and salts"/>
</dbReference>
<dbReference type="Reactome" id="R-MMU-192105">
    <property type="pathway name" value="Synthesis of bile acids and bile salts"/>
</dbReference>
<dbReference type="Reactome" id="R-MMU-193368">
    <property type="pathway name" value="Synthesis of bile acids and bile salts via 7alpha-hydroxycholesterol"/>
</dbReference>
<dbReference type="Reactome" id="R-MMU-193807">
    <property type="pathway name" value="Synthesis of bile acids and bile salts via 27-hydroxycholesterol"/>
</dbReference>
<dbReference type="Reactome" id="R-MMU-211976">
    <property type="pathway name" value="Endogenous sterols"/>
</dbReference>
<dbReference type="Reactome" id="R-MMU-3214847">
    <property type="pathway name" value="HATs acetylate histones"/>
</dbReference>
<dbReference type="Reactome" id="R-MMU-3899300">
    <property type="pathway name" value="SUMOylation of transcription cofactors"/>
</dbReference>
<dbReference type="Reactome" id="R-MMU-400206">
    <property type="pathway name" value="Regulation of lipid metabolism by PPARalpha"/>
</dbReference>
<dbReference type="Reactome" id="R-MMU-9018519">
    <property type="pathway name" value="Estrogen-dependent gene expression"/>
</dbReference>
<dbReference type="Reactome" id="R-MMU-9029569">
    <property type="pathway name" value="NR1H3 &amp; NR1H2 regulate gene expression linked to cholesterol transport and efflux"/>
</dbReference>
<dbReference type="Reactome" id="R-MMU-9623433">
    <property type="pathway name" value="NR1H2 &amp; NR1H3 regulate gene expression to control bile acid homeostasis"/>
</dbReference>
<dbReference type="Reactome" id="R-MMU-9707564">
    <property type="pathway name" value="Cytoprotection by HMOX1"/>
</dbReference>
<dbReference type="BioGRID-ORCS" id="17977">
    <property type="hits" value="3 hits in 82 CRISPR screens"/>
</dbReference>
<dbReference type="ChiTaRS" id="Ncoa1">
    <property type="organism name" value="mouse"/>
</dbReference>
<dbReference type="EvolutionaryTrace" id="P70365"/>
<dbReference type="PRO" id="PR:P70365"/>
<dbReference type="Proteomes" id="UP000000589">
    <property type="component" value="Chromosome 12"/>
</dbReference>
<dbReference type="RNAct" id="P70365">
    <property type="molecule type" value="protein"/>
</dbReference>
<dbReference type="Bgee" id="ENSMUSG00000020647">
    <property type="expression patterns" value="Expressed in rostral migratory stream and 272 other cell types or tissues"/>
</dbReference>
<dbReference type="ExpressionAtlas" id="P70365">
    <property type="expression patterns" value="baseline and differential"/>
</dbReference>
<dbReference type="GO" id="GO:0000785">
    <property type="term" value="C:chromatin"/>
    <property type="evidence" value="ECO:0007669"/>
    <property type="project" value="Ensembl"/>
</dbReference>
<dbReference type="GO" id="GO:0005829">
    <property type="term" value="C:cytosol"/>
    <property type="evidence" value="ECO:0007669"/>
    <property type="project" value="Ensembl"/>
</dbReference>
<dbReference type="GO" id="GO:0005654">
    <property type="term" value="C:nucleoplasm"/>
    <property type="evidence" value="ECO:0000304"/>
    <property type="project" value="Reactome"/>
</dbReference>
<dbReference type="GO" id="GO:0005886">
    <property type="term" value="C:plasma membrane"/>
    <property type="evidence" value="ECO:0007669"/>
    <property type="project" value="Ensembl"/>
</dbReference>
<dbReference type="GO" id="GO:0090575">
    <property type="term" value="C:RNA polymerase II transcription regulator complex"/>
    <property type="evidence" value="ECO:0000266"/>
    <property type="project" value="ComplexPortal"/>
</dbReference>
<dbReference type="GO" id="GO:0005667">
    <property type="term" value="C:transcription regulator complex"/>
    <property type="evidence" value="ECO:0000269"/>
    <property type="project" value="ComplexPortal"/>
</dbReference>
<dbReference type="GO" id="GO:0003682">
    <property type="term" value="F:chromatin binding"/>
    <property type="evidence" value="ECO:0000314"/>
    <property type="project" value="MGI"/>
</dbReference>
<dbReference type="GO" id="GO:0003677">
    <property type="term" value="F:DNA binding"/>
    <property type="evidence" value="ECO:0000314"/>
    <property type="project" value="MGI"/>
</dbReference>
<dbReference type="GO" id="GO:0004402">
    <property type="term" value="F:histone acetyltransferase activity"/>
    <property type="evidence" value="ECO:0007669"/>
    <property type="project" value="UniProtKB-EC"/>
</dbReference>
<dbReference type="GO" id="GO:0030331">
    <property type="term" value="F:nuclear estrogen receptor binding"/>
    <property type="evidence" value="ECO:0007669"/>
    <property type="project" value="Ensembl"/>
</dbReference>
<dbReference type="GO" id="GO:0046965">
    <property type="term" value="F:nuclear retinoid X receptor binding"/>
    <property type="evidence" value="ECO:0007669"/>
    <property type="project" value="Ensembl"/>
</dbReference>
<dbReference type="GO" id="GO:0046983">
    <property type="term" value="F:protein dimerization activity"/>
    <property type="evidence" value="ECO:0007669"/>
    <property type="project" value="InterPro"/>
</dbReference>
<dbReference type="GO" id="GO:0044877">
    <property type="term" value="F:protein-containing complex binding"/>
    <property type="evidence" value="ECO:0007669"/>
    <property type="project" value="Ensembl"/>
</dbReference>
<dbReference type="GO" id="GO:0000977">
    <property type="term" value="F:RNA polymerase II transcription regulatory region sequence-specific DNA binding"/>
    <property type="evidence" value="ECO:0007669"/>
    <property type="project" value="Ensembl"/>
</dbReference>
<dbReference type="GO" id="GO:0003713">
    <property type="term" value="F:transcription coactivator activity"/>
    <property type="evidence" value="ECO:0000314"/>
    <property type="project" value="UniProtKB"/>
</dbReference>
<dbReference type="GO" id="GO:1904017">
    <property type="term" value="P:cellular response to Thyroglobulin triiodothyronine"/>
    <property type="evidence" value="ECO:0000316"/>
    <property type="project" value="MGI"/>
</dbReference>
<dbReference type="GO" id="GO:0021549">
    <property type="term" value="P:cerebellum development"/>
    <property type="evidence" value="ECO:0007669"/>
    <property type="project" value="Ensembl"/>
</dbReference>
<dbReference type="GO" id="GO:0021987">
    <property type="term" value="P:cerebral cortex development"/>
    <property type="evidence" value="ECO:0007669"/>
    <property type="project" value="Ensembl"/>
</dbReference>
<dbReference type="GO" id="GO:0030520">
    <property type="term" value="P:estrogen receptor signaling pathway"/>
    <property type="evidence" value="ECO:0007669"/>
    <property type="project" value="Ensembl"/>
</dbReference>
<dbReference type="GO" id="GO:0044849">
    <property type="term" value="P:estrous cycle"/>
    <property type="evidence" value="ECO:0007669"/>
    <property type="project" value="Ensembl"/>
</dbReference>
<dbReference type="GO" id="GO:0021766">
    <property type="term" value="P:hippocampus development"/>
    <property type="evidence" value="ECO:0007669"/>
    <property type="project" value="Ensembl"/>
</dbReference>
<dbReference type="GO" id="GO:0021854">
    <property type="term" value="P:hypothalamus development"/>
    <property type="evidence" value="ECO:0007669"/>
    <property type="project" value="Ensembl"/>
</dbReference>
<dbReference type="GO" id="GO:0060713">
    <property type="term" value="P:labyrinthine layer morphogenesis"/>
    <property type="evidence" value="ECO:0000316"/>
    <property type="project" value="MGI"/>
</dbReference>
<dbReference type="GO" id="GO:0007595">
    <property type="term" value="P:lactation"/>
    <property type="evidence" value="ECO:0007669"/>
    <property type="project" value="Ensembl"/>
</dbReference>
<dbReference type="GO" id="GO:0008584">
    <property type="term" value="P:male gonad development"/>
    <property type="evidence" value="ECO:0007669"/>
    <property type="project" value="Ensembl"/>
</dbReference>
<dbReference type="GO" id="GO:0060179">
    <property type="term" value="P:male mating behavior"/>
    <property type="evidence" value="ECO:0007669"/>
    <property type="project" value="Ensembl"/>
</dbReference>
<dbReference type="GO" id="GO:0042789">
    <property type="term" value="P:mRNA transcription by RNA polymerase II"/>
    <property type="evidence" value="ECO:0000266"/>
    <property type="project" value="ComplexPortal"/>
</dbReference>
<dbReference type="GO" id="GO:0035357">
    <property type="term" value="P:peroxisome proliferator activated receptor signaling pathway"/>
    <property type="evidence" value="ECO:0000303"/>
    <property type="project" value="ComplexPortal"/>
</dbReference>
<dbReference type="GO" id="GO:1904179">
    <property type="term" value="P:positive regulation of adipose tissue development"/>
    <property type="evidence" value="ECO:0000303"/>
    <property type="project" value="ComplexPortal"/>
</dbReference>
<dbReference type="GO" id="GO:0043065">
    <property type="term" value="P:positive regulation of apoptotic process"/>
    <property type="evidence" value="ECO:0000315"/>
    <property type="project" value="UniProtKB"/>
</dbReference>
<dbReference type="GO" id="GO:0045893">
    <property type="term" value="P:positive regulation of DNA-templated transcription"/>
    <property type="evidence" value="ECO:0000250"/>
    <property type="project" value="UniProtKB"/>
</dbReference>
<dbReference type="GO" id="GO:0045925">
    <property type="term" value="P:positive regulation of female receptivity"/>
    <property type="evidence" value="ECO:0007669"/>
    <property type="project" value="Ensembl"/>
</dbReference>
<dbReference type="GO" id="GO:0045666">
    <property type="term" value="P:positive regulation of neuron differentiation"/>
    <property type="evidence" value="ECO:0000315"/>
    <property type="project" value="UniProtKB"/>
</dbReference>
<dbReference type="GO" id="GO:0045944">
    <property type="term" value="P:positive regulation of transcription by RNA polymerase II"/>
    <property type="evidence" value="ECO:0000314"/>
    <property type="project" value="MGI"/>
</dbReference>
<dbReference type="GO" id="GO:0000435">
    <property type="term" value="P:positive regulation of transcription from RNA polymerase II promoter by galactose"/>
    <property type="evidence" value="ECO:0007669"/>
    <property type="project" value="Ensembl"/>
</dbReference>
<dbReference type="GO" id="GO:0050847">
    <property type="term" value="P:progesterone receptor signaling pathway"/>
    <property type="evidence" value="ECO:0007669"/>
    <property type="project" value="Ensembl"/>
</dbReference>
<dbReference type="GO" id="GO:1900076">
    <property type="term" value="P:regulation of cellular response to insulin stimulus"/>
    <property type="evidence" value="ECO:0000303"/>
    <property type="project" value="ComplexPortal"/>
</dbReference>
<dbReference type="GO" id="GO:0002155">
    <property type="term" value="P:regulation of thyroid hormone receptor signaling pathway"/>
    <property type="evidence" value="ECO:0000316"/>
    <property type="project" value="MGI"/>
</dbReference>
<dbReference type="GO" id="GO:0032355">
    <property type="term" value="P:response to estradiol"/>
    <property type="evidence" value="ECO:0007669"/>
    <property type="project" value="Ensembl"/>
</dbReference>
<dbReference type="GO" id="GO:0032570">
    <property type="term" value="P:response to progesterone"/>
    <property type="evidence" value="ECO:0007669"/>
    <property type="project" value="Ensembl"/>
</dbReference>
<dbReference type="GO" id="GO:0032526">
    <property type="term" value="P:response to retinoic acid"/>
    <property type="evidence" value="ECO:0007669"/>
    <property type="project" value="Ensembl"/>
</dbReference>
<dbReference type="CDD" id="cd18948">
    <property type="entry name" value="bHLH-PAS_NCoA1_SRC1"/>
    <property type="match status" value="1"/>
</dbReference>
<dbReference type="CDD" id="cd00130">
    <property type="entry name" value="PAS"/>
    <property type="match status" value="1"/>
</dbReference>
<dbReference type="FunFam" id="3.30.450.20:FF:000007">
    <property type="entry name" value="Nuclear receptor coactivator"/>
    <property type="match status" value="1"/>
</dbReference>
<dbReference type="FunFam" id="3.30.450.20:FF:000031">
    <property type="entry name" value="Nuclear receptor coactivator"/>
    <property type="match status" value="1"/>
</dbReference>
<dbReference type="FunFam" id="4.10.280.10:FF:000008">
    <property type="entry name" value="Nuclear receptor coactivator"/>
    <property type="match status" value="1"/>
</dbReference>
<dbReference type="Gene3D" id="6.10.140.410">
    <property type="match status" value="1"/>
</dbReference>
<dbReference type="Gene3D" id="4.10.280.10">
    <property type="entry name" value="Helix-loop-helix DNA-binding domain"/>
    <property type="match status" value="1"/>
</dbReference>
<dbReference type="Gene3D" id="3.30.450.20">
    <property type="entry name" value="PAS domain"/>
    <property type="match status" value="2"/>
</dbReference>
<dbReference type="IDEAL" id="IID50084"/>
<dbReference type="InterPro" id="IPR011598">
    <property type="entry name" value="bHLH_dom"/>
</dbReference>
<dbReference type="InterPro" id="IPR056193">
    <property type="entry name" value="bHLH_NCOA1-3"/>
</dbReference>
<dbReference type="InterPro" id="IPR036638">
    <property type="entry name" value="HLH_DNA-bd_sf"/>
</dbReference>
<dbReference type="InterPro" id="IPR010011">
    <property type="entry name" value="NCO_DUF1518"/>
</dbReference>
<dbReference type="InterPro" id="IPR028819">
    <property type="entry name" value="NCOA1_bHLH"/>
</dbReference>
<dbReference type="InterPro" id="IPR009110">
    <property type="entry name" value="Nuc_rcpt_coact"/>
</dbReference>
<dbReference type="InterPro" id="IPR014920">
    <property type="entry name" value="Nuc_rcpt_coact_Ncoa-typ"/>
</dbReference>
<dbReference type="InterPro" id="IPR037077">
    <property type="entry name" value="Nuc_rcpt_coact_Ncoa_int_sf"/>
</dbReference>
<dbReference type="InterPro" id="IPR017426">
    <property type="entry name" value="Nuclear_rcpt_coactivator"/>
</dbReference>
<dbReference type="InterPro" id="IPR000014">
    <property type="entry name" value="PAS"/>
</dbReference>
<dbReference type="InterPro" id="IPR035965">
    <property type="entry name" value="PAS-like_dom_sf"/>
</dbReference>
<dbReference type="InterPro" id="IPR013767">
    <property type="entry name" value="PAS_fold"/>
</dbReference>
<dbReference type="InterPro" id="IPR014935">
    <property type="entry name" value="SRC/p160_LXXLL"/>
</dbReference>
<dbReference type="PANTHER" id="PTHR10684">
    <property type="entry name" value="NUCLEAR RECEPTOR COACTIVATOR"/>
    <property type="match status" value="1"/>
</dbReference>
<dbReference type="PANTHER" id="PTHR10684:SF1">
    <property type="entry name" value="NUCLEAR RECEPTOR COACTIVATOR 1"/>
    <property type="match status" value="1"/>
</dbReference>
<dbReference type="Pfam" id="PF23172">
    <property type="entry name" value="bHLH_NCOA"/>
    <property type="match status" value="1"/>
</dbReference>
<dbReference type="Pfam" id="PF07469">
    <property type="entry name" value="DUF1518"/>
    <property type="match status" value="2"/>
</dbReference>
<dbReference type="Pfam" id="PF16665">
    <property type="entry name" value="NCOA_u2"/>
    <property type="match status" value="1"/>
</dbReference>
<dbReference type="Pfam" id="PF08815">
    <property type="entry name" value="Nuc_rec_co-act"/>
    <property type="match status" value="1"/>
</dbReference>
<dbReference type="Pfam" id="PF00989">
    <property type="entry name" value="PAS"/>
    <property type="match status" value="1"/>
</dbReference>
<dbReference type="Pfam" id="PF14598">
    <property type="entry name" value="PAS_11"/>
    <property type="match status" value="1"/>
</dbReference>
<dbReference type="Pfam" id="PF08832">
    <property type="entry name" value="SRC-1"/>
    <property type="match status" value="1"/>
</dbReference>
<dbReference type="PIRSF" id="PIRSF038181">
    <property type="entry name" value="Nuclear_receptor_coactivator"/>
    <property type="match status" value="1"/>
</dbReference>
<dbReference type="SMART" id="SM01151">
    <property type="entry name" value="DUF1518"/>
    <property type="match status" value="2"/>
</dbReference>
<dbReference type="SMART" id="SM00353">
    <property type="entry name" value="HLH"/>
    <property type="match status" value="1"/>
</dbReference>
<dbReference type="SMART" id="SM00091">
    <property type="entry name" value="PAS"/>
    <property type="match status" value="1"/>
</dbReference>
<dbReference type="SUPFAM" id="SSF47459">
    <property type="entry name" value="HLH, helix-loop-helix DNA-binding domain"/>
    <property type="match status" value="1"/>
</dbReference>
<dbReference type="SUPFAM" id="SSF69125">
    <property type="entry name" value="Nuclear receptor coactivator interlocking domain"/>
    <property type="match status" value="1"/>
</dbReference>
<dbReference type="SUPFAM" id="SSF55785">
    <property type="entry name" value="PYP-like sensor domain (PAS domain)"/>
    <property type="match status" value="2"/>
</dbReference>
<dbReference type="PROSITE" id="PS50888">
    <property type="entry name" value="BHLH"/>
    <property type="match status" value="1"/>
</dbReference>
<dbReference type="PROSITE" id="PS50112">
    <property type="entry name" value="PAS"/>
    <property type="match status" value="1"/>
</dbReference>
<accession>P70365</accession>
<accession>P70366</accession>
<accession>Q61202</accession>
<accession>Q66JL7</accession>
<accession>Q8CBI9</accession>
<keyword id="KW-0002">3D-structure</keyword>
<keyword id="KW-0007">Acetylation</keyword>
<keyword id="KW-0010">Activator</keyword>
<keyword id="KW-0012">Acyltransferase</keyword>
<keyword id="KW-0025">Alternative splicing</keyword>
<keyword id="KW-0903">Direct protein sequencing</keyword>
<keyword id="KW-1017">Isopeptide bond</keyword>
<keyword id="KW-0488">Methylation</keyword>
<keyword id="KW-0539">Nucleus</keyword>
<keyword id="KW-0597">Phosphoprotein</keyword>
<keyword id="KW-1185">Reference proteome</keyword>
<keyword id="KW-0677">Repeat</keyword>
<keyword id="KW-0804">Transcription</keyword>
<keyword id="KW-0805">Transcription regulation</keyword>
<keyword id="KW-0808">Transferase</keyword>
<keyword id="KW-0832">Ubl conjugation</keyword>
<gene>
    <name type="primary">Ncoa1</name>
    <name type="synonym">Src1</name>
</gene>